<protein>
    <recommendedName>
        <fullName evidence="1">4-hydroxy-tetrahydrodipicolinate reductase</fullName>
        <shortName evidence="1">HTPA reductase</shortName>
        <ecNumber evidence="1">1.17.1.8</ecNumber>
    </recommendedName>
</protein>
<gene>
    <name evidence="1" type="primary">dapB</name>
    <name type="ordered locus">mma_2892</name>
</gene>
<name>DAPB_JANMA</name>
<reference key="1">
    <citation type="journal article" date="2007" name="PLoS Genet.">
        <title>Genome analysis of Minibacterium massiliensis highlights the convergent evolution of water-living bacteria.</title>
        <authorList>
            <person name="Audic S."/>
            <person name="Robert C."/>
            <person name="Campagna B."/>
            <person name="Parinello H."/>
            <person name="Claverie J.-M."/>
            <person name="Raoult D."/>
            <person name="Drancourt M."/>
        </authorList>
    </citation>
    <scope>NUCLEOTIDE SEQUENCE [LARGE SCALE GENOMIC DNA]</scope>
    <source>
        <strain>Marseille</strain>
    </source>
</reference>
<sequence>MNQLKIAVAGASGRMGHMLIETILEAQDATLTGALDIAASPAVGSDAAAFLGKPAGVLIESDFAKGLANSEFLIDFTRPEGTLQHLEYCAAHNIKMIIGTTGFDAAGKAAIAAAAEKTAIMFAPNMSVGVNVTMKLLEMAAKNFSEGYDIEIIEAHHRHKVDAPSGTAIKMGEVIAGALGKELNDVAVWAREGVTGARDPSSIGFATVRGGDIIGDHTVLFAGIGERIEISHKSSSRVSYAHGSLRAARFLADKKTGLYDMQDVLGLR</sequence>
<accession>A6T235</accession>
<organism>
    <name type="scientific">Janthinobacterium sp. (strain Marseille)</name>
    <name type="common">Minibacterium massiliensis</name>
    <dbReference type="NCBI Taxonomy" id="375286"/>
    <lineage>
        <taxon>Bacteria</taxon>
        <taxon>Pseudomonadati</taxon>
        <taxon>Pseudomonadota</taxon>
        <taxon>Betaproteobacteria</taxon>
        <taxon>Burkholderiales</taxon>
        <taxon>Oxalobacteraceae</taxon>
        <taxon>Janthinobacterium</taxon>
    </lineage>
</organism>
<proteinExistence type="inferred from homology"/>
<comment type="function">
    <text evidence="1">Catalyzes the conversion of 4-hydroxy-tetrahydrodipicolinate (HTPA) to tetrahydrodipicolinate.</text>
</comment>
<comment type="catalytic activity">
    <reaction evidence="1">
        <text>(S)-2,3,4,5-tetrahydrodipicolinate + NAD(+) + H2O = (2S,4S)-4-hydroxy-2,3,4,5-tetrahydrodipicolinate + NADH + H(+)</text>
        <dbReference type="Rhea" id="RHEA:35323"/>
        <dbReference type="ChEBI" id="CHEBI:15377"/>
        <dbReference type="ChEBI" id="CHEBI:15378"/>
        <dbReference type="ChEBI" id="CHEBI:16845"/>
        <dbReference type="ChEBI" id="CHEBI:57540"/>
        <dbReference type="ChEBI" id="CHEBI:57945"/>
        <dbReference type="ChEBI" id="CHEBI:67139"/>
        <dbReference type="EC" id="1.17.1.8"/>
    </reaction>
</comment>
<comment type="catalytic activity">
    <reaction evidence="1">
        <text>(S)-2,3,4,5-tetrahydrodipicolinate + NADP(+) + H2O = (2S,4S)-4-hydroxy-2,3,4,5-tetrahydrodipicolinate + NADPH + H(+)</text>
        <dbReference type="Rhea" id="RHEA:35331"/>
        <dbReference type="ChEBI" id="CHEBI:15377"/>
        <dbReference type="ChEBI" id="CHEBI:15378"/>
        <dbReference type="ChEBI" id="CHEBI:16845"/>
        <dbReference type="ChEBI" id="CHEBI:57783"/>
        <dbReference type="ChEBI" id="CHEBI:58349"/>
        <dbReference type="ChEBI" id="CHEBI:67139"/>
        <dbReference type="EC" id="1.17.1.8"/>
    </reaction>
</comment>
<comment type="pathway">
    <text evidence="1">Amino-acid biosynthesis; L-lysine biosynthesis via DAP pathway; (S)-tetrahydrodipicolinate from L-aspartate: step 4/4.</text>
</comment>
<comment type="subcellular location">
    <subcellularLocation>
        <location evidence="1">Cytoplasm</location>
    </subcellularLocation>
</comment>
<comment type="similarity">
    <text evidence="1">Belongs to the DapB family.</text>
</comment>
<comment type="caution">
    <text evidence="2">Was originally thought to be a dihydrodipicolinate reductase (DHDPR), catalyzing the conversion of dihydrodipicolinate to tetrahydrodipicolinate. However, it was shown in E.coli that the substrate of the enzymatic reaction is not dihydrodipicolinate (DHDP) but in fact (2S,4S)-4-hydroxy-2,3,4,5-tetrahydrodipicolinic acid (HTPA), the product released by the DapA-catalyzed reaction.</text>
</comment>
<evidence type="ECO:0000255" key="1">
    <source>
        <dbReference type="HAMAP-Rule" id="MF_00102"/>
    </source>
</evidence>
<evidence type="ECO:0000305" key="2"/>
<dbReference type="EC" id="1.17.1.8" evidence="1"/>
<dbReference type="EMBL" id="CP000269">
    <property type="protein sequence ID" value="ABR88289.1"/>
    <property type="molecule type" value="Genomic_DNA"/>
</dbReference>
<dbReference type="RefSeq" id="WP_012080741.1">
    <property type="nucleotide sequence ID" value="NC_009659.1"/>
</dbReference>
<dbReference type="SMR" id="A6T235"/>
<dbReference type="STRING" id="375286.mma_2892"/>
<dbReference type="KEGG" id="mms:mma_2892"/>
<dbReference type="eggNOG" id="COG0289">
    <property type="taxonomic scope" value="Bacteria"/>
</dbReference>
<dbReference type="HOGENOM" id="CLU_047479_2_1_4"/>
<dbReference type="OrthoDB" id="9790352at2"/>
<dbReference type="UniPathway" id="UPA00034">
    <property type="reaction ID" value="UER00018"/>
</dbReference>
<dbReference type="Proteomes" id="UP000006388">
    <property type="component" value="Chromosome"/>
</dbReference>
<dbReference type="GO" id="GO:0005829">
    <property type="term" value="C:cytosol"/>
    <property type="evidence" value="ECO:0007669"/>
    <property type="project" value="TreeGrafter"/>
</dbReference>
<dbReference type="GO" id="GO:0008839">
    <property type="term" value="F:4-hydroxy-tetrahydrodipicolinate reductase"/>
    <property type="evidence" value="ECO:0007669"/>
    <property type="project" value="UniProtKB-EC"/>
</dbReference>
<dbReference type="GO" id="GO:0051287">
    <property type="term" value="F:NAD binding"/>
    <property type="evidence" value="ECO:0007669"/>
    <property type="project" value="UniProtKB-UniRule"/>
</dbReference>
<dbReference type="GO" id="GO:0050661">
    <property type="term" value="F:NADP binding"/>
    <property type="evidence" value="ECO:0007669"/>
    <property type="project" value="UniProtKB-UniRule"/>
</dbReference>
<dbReference type="GO" id="GO:0016726">
    <property type="term" value="F:oxidoreductase activity, acting on CH or CH2 groups, NAD or NADP as acceptor"/>
    <property type="evidence" value="ECO:0007669"/>
    <property type="project" value="UniProtKB-UniRule"/>
</dbReference>
<dbReference type="GO" id="GO:0019877">
    <property type="term" value="P:diaminopimelate biosynthetic process"/>
    <property type="evidence" value="ECO:0007669"/>
    <property type="project" value="UniProtKB-UniRule"/>
</dbReference>
<dbReference type="GO" id="GO:0009089">
    <property type="term" value="P:lysine biosynthetic process via diaminopimelate"/>
    <property type="evidence" value="ECO:0007669"/>
    <property type="project" value="UniProtKB-UniRule"/>
</dbReference>
<dbReference type="CDD" id="cd02274">
    <property type="entry name" value="DHDPR_N"/>
    <property type="match status" value="1"/>
</dbReference>
<dbReference type="FunFam" id="3.30.360.10:FF:000004">
    <property type="entry name" value="4-hydroxy-tetrahydrodipicolinate reductase"/>
    <property type="match status" value="1"/>
</dbReference>
<dbReference type="Gene3D" id="3.30.360.10">
    <property type="entry name" value="Dihydrodipicolinate Reductase, domain 2"/>
    <property type="match status" value="1"/>
</dbReference>
<dbReference type="Gene3D" id="3.40.50.720">
    <property type="entry name" value="NAD(P)-binding Rossmann-like Domain"/>
    <property type="match status" value="1"/>
</dbReference>
<dbReference type="HAMAP" id="MF_00102">
    <property type="entry name" value="DapB"/>
    <property type="match status" value="1"/>
</dbReference>
<dbReference type="InterPro" id="IPR022663">
    <property type="entry name" value="DapB_C"/>
</dbReference>
<dbReference type="InterPro" id="IPR000846">
    <property type="entry name" value="DapB_N"/>
</dbReference>
<dbReference type="InterPro" id="IPR022664">
    <property type="entry name" value="DapB_N_CS"/>
</dbReference>
<dbReference type="InterPro" id="IPR023940">
    <property type="entry name" value="DHDPR_bac"/>
</dbReference>
<dbReference type="InterPro" id="IPR036291">
    <property type="entry name" value="NAD(P)-bd_dom_sf"/>
</dbReference>
<dbReference type="NCBIfam" id="TIGR00036">
    <property type="entry name" value="dapB"/>
    <property type="match status" value="1"/>
</dbReference>
<dbReference type="PANTHER" id="PTHR20836:SF0">
    <property type="entry name" value="4-HYDROXY-TETRAHYDRODIPICOLINATE REDUCTASE 1, CHLOROPLASTIC-RELATED"/>
    <property type="match status" value="1"/>
</dbReference>
<dbReference type="PANTHER" id="PTHR20836">
    <property type="entry name" value="DIHYDRODIPICOLINATE REDUCTASE"/>
    <property type="match status" value="1"/>
</dbReference>
<dbReference type="Pfam" id="PF05173">
    <property type="entry name" value="DapB_C"/>
    <property type="match status" value="1"/>
</dbReference>
<dbReference type="Pfam" id="PF01113">
    <property type="entry name" value="DapB_N"/>
    <property type="match status" value="1"/>
</dbReference>
<dbReference type="PIRSF" id="PIRSF000161">
    <property type="entry name" value="DHPR"/>
    <property type="match status" value="1"/>
</dbReference>
<dbReference type="SUPFAM" id="SSF55347">
    <property type="entry name" value="Glyceraldehyde-3-phosphate dehydrogenase-like, C-terminal domain"/>
    <property type="match status" value="1"/>
</dbReference>
<dbReference type="SUPFAM" id="SSF51735">
    <property type="entry name" value="NAD(P)-binding Rossmann-fold domains"/>
    <property type="match status" value="1"/>
</dbReference>
<dbReference type="PROSITE" id="PS01298">
    <property type="entry name" value="DAPB"/>
    <property type="match status" value="1"/>
</dbReference>
<keyword id="KW-0028">Amino-acid biosynthesis</keyword>
<keyword id="KW-0963">Cytoplasm</keyword>
<keyword id="KW-0220">Diaminopimelate biosynthesis</keyword>
<keyword id="KW-0457">Lysine biosynthesis</keyword>
<keyword id="KW-0520">NAD</keyword>
<keyword id="KW-0521">NADP</keyword>
<keyword id="KW-0560">Oxidoreductase</keyword>
<feature type="chain" id="PRO_1000057687" description="4-hydroxy-tetrahydrodipicolinate reductase">
    <location>
        <begin position="1"/>
        <end position="268"/>
    </location>
</feature>
<feature type="active site" description="Proton donor/acceptor" evidence="1">
    <location>
        <position position="156"/>
    </location>
</feature>
<feature type="active site" description="Proton donor" evidence="1">
    <location>
        <position position="160"/>
    </location>
</feature>
<feature type="binding site" evidence="1">
    <location>
        <begin position="10"/>
        <end position="15"/>
    </location>
    <ligand>
        <name>NAD(+)</name>
        <dbReference type="ChEBI" id="CHEBI:57540"/>
    </ligand>
</feature>
<feature type="binding site" evidence="1">
    <location>
        <position position="36"/>
    </location>
    <ligand>
        <name>NAD(+)</name>
        <dbReference type="ChEBI" id="CHEBI:57540"/>
    </ligand>
</feature>
<feature type="binding site" evidence="1">
    <location>
        <begin position="99"/>
        <end position="101"/>
    </location>
    <ligand>
        <name>NAD(+)</name>
        <dbReference type="ChEBI" id="CHEBI:57540"/>
    </ligand>
</feature>
<feature type="binding site" evidence="1">
    <location>
        <begin position="123"/>
        <end position="126"/>
    </location>
    <ligand>
        <name>NAD(+)</name>
        <dbReference type="ChEBI" id="CHEBI:57540"/>
    </ligand>
</feature>
<feature type="binding site" evidence="1">
    <location>
        <position position="157"/>
    </location>
    <ligand>
        <name>(S)-2,3,4,5-tetrahydrodipicolinate</name>
        <dbReference type="ChEBI" id="CHEBI:16845"/>
    </ligand>
</feature>
<feature type="binding site" evidence="1">
    <location>
        <begin position="166"/>
        <end position="167"/>
    </location>
    <ligand>
        <name>(S)-2,3,4,5-tetrahydrodipicolinate</name>
        <dbReference type="ChEBI" id="CHEBI:16845"/>
    </ligand>
</feature>